<accession>Q46323</accession>
<organism>
    <name type="scientific">Clostridium perfringens (strain 13 / Type A)</name>
    <dbReference type="NCBI Taxonomy" id="195102"/>
    <lineage>
        <taxon>Bacteria</taxon>
        <taxon>Bacillati</taxon>
        <taxon>Bacillota</taxon>
        <taxon>Clostridia</taxon>
        <taxon>Eubacteriales</taxon>
        <taxon>Clostridiaceae</taxon>
        <taxon>Clostridium</taxon>
    </lineage>
</organism>
<proteinExistence type="inferred from homology"/>
<name>UVRB_CLOPE</name>
<sequence length="659" mass="75523">MGEFKIQSKFKPTGDQPKAIDTLVQSIENGNRGQTLLGVTGSGKTFTMANIIERTQKPTLILAHNKTLAAQLCAEFKEFFPDNIVEYFVSYYDYYQPEAYVPQTDTFIEKDASINDEIDKLRHSATSALLERRDVIIVASVSCIYGLGNPEEYKKLTISLRPGMIKDRDEVIKKLIEIQYERNDIDFARGTFRVRGDNLDIIPSSSSSKGIRIEFFGDEIDRIREFDVLTGNIIGERQHVSITPASHFAASEETLEKSIRVIEDELEDRLKVLTAEDKILEAQRLKQRTNYDIEMIREMGYCQGIENYSRILDGRMPGTPPQTLLDYFPEDFLMFIDESHVTLPQVRAMYAGDRSRKTSLVEFGFRLPCAFDNRPLKFSEFESKINQVVFVSATPGEYELDHSEIVAEQIIRPTGLLDPVIEIRPIQGQIDDLYGEIQRTVQRGFRVLITTLTKRMAEDLTKYLKDLNVKATYMHSDIDTLERMKIIRELRLGEVDVLIGINLLREGLDIPEVALVAILDADKEGFLRSETSLIQTIGRAARNSESKVIMYADNITKSMDKSIKETERRRVIQMEYNEEHNITPTTVIKGVRDIIEATKVSEEKENYESEVKKAAKKDIPVEKLIEQYEEEMKEAAKNLQFERAAELRDIIKDLKENSK</sequence>
<dbReference type="EMBL" id="BA000016">
    <property type="protein sequence ID" value="BAB80009.1"/>
    <property type="molecule type" value="Genomic_DNA"/>
</dbReference>
<dbReference type="EMBL" id="X86531">
    <property type="protein sequence ID" value="CAA60243.1"/>
    <property type="molecule type" value="Genomic_DNA"/>
</dbReference>
<dbReference type="RefSeq" id="WP_011009723.1">
    <property type="nucleotide sequence ID" value="NC_003366.1"/>
</dbReference>
<dbReference type="SMR" id="Q46323"/>
<dbReference type="STRING" id="195102.gene:10489559"/>
<dbReference type="KEGG" id="cpe:CPE0303"/>
<dbReference type="HOGENOM" id="CLU_009621_2_1_9"/>
<dbReference type="Proteomes" id="UP000000818">
    <property type="component" value="Chromosome"/>
</dbReference>
<dbReference type="GO" id="GO:0005737">
    <property type="term" value="C:cytoplasm"/>
    <property type="evidence" value="ECO:0007669"/>
    <property type="project" value="UniProtKB-SubCell"/>
</dbReference>
<dbReference type="GO" id="GO:0009380">
    <property type="term" value="C:excinuclease repair complex"/>
    <property type="evidence" value="ECO:0007669"/>
    <property type="project" value="InterPro"/>
</dbReference>
<dbReference type="GO" id="GO:0005524">
    <property type="term" value="F:ATP binding"/>
    <property type="evidence" value="ECO:0007669"/>
    <property type="project" value="UniProtKB-UniRule"/>
</dbReference>
<dbReference type="GO" id="GO:0016887">
    <property type="term" value="F:ATP hydrolysis activity"/>
    <property type="evidence" value="ECO:0007669"/>
    <property type="project" value="InterPro"/>
</dbReference>
<dbReference type="GO" id="GO:0003677">
    <property type="term" value="F:DNA binding"/>
    <property type="evidence" value="ECO:0007669"/>
    <property type="project" value="UniProtKB-UniRule"/>
</dbReference>
<dbReference type="GO" id="GO:0009381">
    <property type="term" value="F:excinuclease ABC activity"/>
    <property type="evidence" value="ECO:0007669"/>
    <property type="project" value="UniProtKB-UniRule"/>
</dbReference>
<dbReference type="GO" id="GO:0006289">
    <property type="term" value="P:nucleotide-excision repair"/>
    <property type="evidence" value="ECO:0007669"/>
    <property type="project" value="UniProtKB-UniRule"/>
</dbReference>
<dbReference type="GO" id="GO:0009432">
    <property type="term" value="P:SOS response"/>
    <property type="evidence" value="ECO:0007669"/>
    <property type="project" value="UniProtKB-UniRule"/>
</dbReference>
<dbReference type="CDD" id="cd17916">
    <property type="entry name" value="DEXHc_UvrB"/>
    <property type="match status" value="1"/>
</dbReference>
<dbReference type="CDD" id="cd18790">
    <property type="entry name" value="SF2_C_UvrB"/>
    <property type="match status" value="1"/>
</dbReference>
<dbReference type="Gene3D" id="3.40.50.300">
    <property type="entry name" value="P-loop containing nucleotide triphosphate hydrolases"/>
    <property type="match status" value="3"/>
</dbReference>
<dbReference type="Gene3D" id="4.10.860.10">
    <property type="entry name" value="UVR domain"/>
    <property type="match status" value="1"/>
</dbReference>
<dbReference type="HAMAP" id="MF_00204">
    <property type="entry name" value="UvrB"/>
    <property type="match status" value="1"/>
</dbReference>
<dbReference type="InterPro" id="IPR006935">
    <property type="entry name" value="Helicase/UvrB_N"/>
</dbReference>
<dbReference type="InterPro" id="IPR014001">
    <property type="entry name" value="Helicase_ATP-bd"/>
</dbReference>
<dbReference type="InterPro" id="IPR001650">
    <property type="entry name" value="Helicase_C-like"/>
</dbReference>
<dbReference type="InterPro" id="IPR027417">
    <property type="entry name" value="P-loop_NTPase"/>
</dbReference>
<dbReference type="InterPro" id="IPR001943">
    <property type="entry name" value="UVR_dom"/>
</dbReference>
<dbReference type="InterPro" id="IPR036876">
    <property type="entry name" value="UVR_dom_sf"/>
</dbReference>
<dbReference type="InterPro" id="IPR004807">
    <property type="entry name" value="UvrB"/>
</dbReference>
<dbReference type="InterPro" id="IPR041471">
    <property type="entry name" value="UvrB_inter"/>
</dbReference>
<dbReference type="InterPro" id="IPR024759">
    <property type="entry name" value="UvrB_YAD/RRR_dom"/>
</dbReference>
<dbReference type="NCBIfam" id="NF003673">
    <property type="entry name" value="PRK05298.1"/>
    <property type="match status" value="1"/>
</dbReference>
<dbReference type="NCBIfam" id="TIGR00631">
    <property type="entry name" value="uvrb"/>
    <property type="match status" value="1"/>
</dbReference>
<dbReference type="PANTHER" id="PTHR24029">
    <property type="entry name" value="UVRABC SYSTEM PROTEIN B"/>
    <property type="match status" value="1"/>
</dbReference>
<dbReference type="PANTHER" id="PTHR24029:SF0">
    <property type="entry name" value="UVRABC SYSTEM PROTEIN B"/>
    <property type="match status" value="1"/>
</dbReference>
<dbReference type="Pfam" id="PF00271">
    <property type="entry name" value="Helicase_C"/>
    <property type="match status" value="1"/>
</dbReference>
<dbReference type="Pfam" id="PF04851">
    <property type="entry name" value="ResIII"/>
    <property type="match status" value="1"/>
</dbReference>
<dbReference type="Pfam" id="PF02151">
    <property type="entry name" value="UVR"/>
    <property type="match status" value="1"/>
</dbReference>
<dbReference type="Pfam" id="PF12344">
    <property type="entry name" value="UvrB"/>
    <property type="match status" value="1"/>
</dbReference>
<dbReference type="Pfam" id="PF17757">
    <property type="entry name" value="UvrB_inter"/>
    <property type="match status" value="1"/>
</dbReference>
<dbReference type="SMART" id="SM00487">
    <property type="entry name" value="DEXDc"/>
    <property type="match status" value="1"/>
</dbReference>
<dbReference type="SMART" id="SM00490">
    <property type="entry name" value="HELICc"/>
    <property type="match status" value="1"/>
</dbReference>
<dbReference type="SUPFAM" id="SSF46600">
    <property type="entry name" value="C-terminal UvrC-binding domain of UvrB"/>
    <property type="match status" value="1"/>
</dbReference>
<dbReference type="SUPFAM" id="SSF52540">
    <property type="entry name" value="P-loop containing nucleoside triphosphate hydrolases"/>
    <property type="match status" value="2"/>
</dbReference>
<dbReference type="PROSITE" id="PS51192">
    <property type="entry name" value="HELICASE_ATP_BIND_1"/>
    <property type="match status" value="1"/>
</dbReference>
<dbReference type="PROSITE" id="PS51194">
    <property type="entry name" value="HELICASE_CTER"/>
    <property type="match status" value="1"/>
</dbReference>
<dbReference type="PROSITE" id="PS50151">
    <property type="entry name" value="UVR"/>
    <property type="match status" value="1"/>
</dbReference>
<feature type="chain" id="PRO_0000138389" description="UvrABC system protein B">
    <location>
        <begin position="1"/>
        <end position="659"/>
    </location>
</feature>
<feature type="domain" description="Helicase ATP-binding" evidence="1">
    <location>
        <begin position="25"/>
        <end position="412"/>
    </location>
</feature>
<feature type="domain" description="Helicase C-terminal" evidence="1">
    <location>
        <begin position="429"/>
        <end position="582"/>
    </location>
</feature>
<feature type="domain" description="UVR" evidence="1">
    <location>
        <begin position="622"/>
        <end position="657"/>
    </location>
</feature>
<feature type="short sequence motif" description="Beta-hairpin">
    <location>
        <begin position="91"/>
        <end position="114"/>
    </location>
</feature>
<feature type="binding site" evidence="1">
    <location>
        <begin position="38"/>
        <end position="45"/>
    </location>
    <ligand>
        <name>ATP</name>
        <dbReference type="ChEBI" id="CHEBI:30616"/>
    </ligand>
</feature>
<feature type="sequence conflict" description="In Ref. 2; CAA60243." evidence="2" ref="2">
    <original>AAQLCAE</original>
    <variation>GSALIVK</variation>
    <location>
        <begin position="69"/>
        <end position="75"/>
    </location>
</feature>
<reference key="1">
    <citation type="journal article" date="2002" name="Proc. Natl. Acad. Sci. U.S.A.">
        <title>Complete genome sequence of Clostridium perfringens, an anaerobic flesh-eater.</title>
        <authorList>
            <person name="Shimizu T."/>
            <person name="Ohtani K."/>
            <person name="Hirakawa H."/>
            <person name="Ohshima K."/>
            <person name="Yamashita A."/>
            <person name="Shiba T."/>
            <person name="Ogasawara N."/>
            <person name="Hattori M."/>
            <person name="Kuhara S."/>
            <person name="Hayashi H."/>
        </authorList>
    </citation>
    <scope>NUCLEOTIDE SEQUENCE [LARGE SCALE GENOMIC DNA]</scope>
    <source>
        <strain>13 / Type A</strain>
    </source>
</reference>
<reference key="2">
    <citation type="journal article" date="1995" name="J. Bacteriol.">
        <title>Rapid expansion of the physical and genetic map of the chromosome of Clostridium perfringens CPN50.</title>
        <authorList>
            <person name="Katayama S."/>
            <person name="Dupuy B."/>
            <person name="Garnier T."/>
            <person name="Cole S.T."/>
        </authorList>
    </citation>
    <scope>NUCLEOTIDE SEQUENCE [GENOMIC DNA] OF 69-155</scope>
    <source>
        <strain>CPN50</strain>
    </source>
</reference>
<evidence type="ECO:0000255" key="1">
    <source>
        <dbReference type="HAMAP-Rule" id="MF_00204"/>
    </source>
</evidence>
<evidence type="ECO:0000305" key="2"/>
<protein>
    <recommendedName>
        <fullName evidence="1">UvrABC system protein B</fullName>
        <shortName evidence="1">Protein UvrB</shortName>
    </recommendedName>
    <alternativeName>
        <fullName evidence="1">Excinuclease ABC subunit B</fullName>
    </alternativeName>
</protein>
<comment type="function">
    <text evidence="1">The UvrABC repair system catalyzes the recognition and processing of DNA lesions. A damage recognition complex composed of 2 UvrA and 2 UvrB subunits scans DNA for abnormalities. Upon binding of the UvrA(2)B(2) complex to a putative damaged site, the DNA wraps around one UvrB monomer. DNA wrap is dependent on ATP binding by UvrB and probably causes local melting of the DNA helix, facilitating insertion of UvrB beta-hairpin between the DNA strands. Then UvrB probes one DNA strand for the presence of a lesion. If a lesion is found the UvrA subunits dissociate and the UvrB-DNA preincision complex is formed. This complex is subsequently bound by UvrC and the second UvrB is released. If no lesion is found, the DNA wraps around the other UvrB subunit that will check the other stand for damage.</text>
</comment>
<comment type="subunit">
    <text evidence="1">Forms a heterotetramer with UvrA during the search for lesions. Interacts with UvrC in an incision complex.</text>
</comment>
<comment type="subcellular location">
    <subcellularLocation>
        <location evidence="1">Cytoplasm</location>
    </subcellularLocation>
</comment>
<comment type="domain">
    <text evidence="1">The beta-hairpin motif is involved in DNA binding.</text>
</comment>
<comment type="similarity">
    <text evidence="1">Belongs to the UvrB family.</text>
</comment>
<gene>
    <name evidence="1" type="primary">uvrB</name>
    <name type="ordered locus">CPE0303</name>
</gene>
<keyword id="KW-0067">ATP-binding</keyword>
<keyword id="KW-0963">Cytoplasm</keyword>
<keyword id="KW-0227">DNA damage</keyword>
<keyword id="KW-0228">DNA excision</keyword>
<keyword id="KW-0234">DNA repair</keyword>
<keyword id="KW-0267">Excision nuclease</keyword>
<keyword id="KW-0547">Nucleotide-binding</keyword>
<keyword id="KW-1185">Reference proteome</keyword>
<keyword id="KW-0742">SOS response</keyword>